<protein>
    <recommendedName>
        <fullName>Protein lin-54</fullName>
    </recommendedName>
    <alternativeName>
        <fullName>Abnormal cell lineage protein 54</fullName>
    </alternativeName>
</protein>
<feature type="chain" id="PRO_0000341395" description="Protein lin-54">
    <location>
        <begin position="1"/>
        <end position="435"/>
    </location>
</feature>
<feature type="domain" description="CRC" evidence="2">
    <location>
        <begin position="173"/>
        <end position="288"/>
    </location>
</feature>
<feature type="region of interest" description="Disordered" evidence="3">
    <location>
        <begin position="73"/>
        <end position="136"/>
    </location>
</feature>
<feature type="region of interest" description="DNA-binding" evidence="1">
    <location>
        <begin position="175"/>
        <end position="188"/>
    </location>
</feature>
<feature type="region of interest" description="Linker" evidence="1">
    <location>
        <begin position="235"/>
        <end position="250"/>
    </location>
</feature>
<feature type="region of interest" description="DNA-binding" evidence="1">
    <location>
        <begin position="253"/>
        <end position="266"/>
    </location>
</feature>
<feature type="region of interest" description="Disordered" evidence="3">
    <location>
        <begin position="415"/>
        <end position="435"/>
    </location>
</feature>
<feature type="compositionally biased region" description="Polar residues" evidence="3">
    <location>
        <begin position="102"/>
        <end position="120"/>
    </location>
</feature>
<feature type="binding site" evidence="1">
    <location>
        <position position="177"/>
    </location>
    <ligand>
        <name>Zn(2+)</name>
        <dbReference type="ChEBI" id="CHEBI:29105"/>
        <label>1</label>
    </ligand>
</feature>
<feature type="binding site" evidence="1">
    <location>
        <position position="177"/>
    </location>
    <ligand>
        <name>Zn(2+)</name>
        <dbReference type="ChEBI" id="CHEBI:29105"/>
        <label>2</label>
    </ligand>
</feature>
<feature type="binding site" evidence="1">
    <location>
        <position position="179"/>
    </location>
    <ligand>
        <name>Zn(2+)</name>
        <dbReference type="ChEBI" id="CHEBI:29105"/>
        <label>1</label>
    </ligand>
</feature>
<feature type="binding site" evidence="1">
    <location>
        <position position="184"/>
    </location>
    <ligand>
        <name>Zn(2+)</name>
        <dbReference type="ChEBI" id="CHEBI:29105"/>
        <label>1</label>
    </ligand>
</feature>
<feature type="binding site" evidence="1">
    <location>
        <position position="184"/>
    </location>
    <ligand>
        <name>Zn(2+)</name>
        <dbReference type="ChEBI" id="CHEBI:29105"/>
        <label>3</label>
    </ligand>
</feature>
<feature type="binding site" evidence="1">
    <location>
        <position position="189"/>
    </location>
    <ligand>
        <name>Zn(2+)</name>
        <dbReference type="ChEBI" id="CHEBI:29105"/>
        <label>1</label>
    </ligand>
</feature>
<feature type="binding site" evidence="1">
    <location>
        <position position="191"/>
    </location>
    <ligand>
        <name>Zn(2+)</name>
        <dbReference type="ChEBI" id="CHEBI:29105"/>
        <label>2</label>
    </ligand>
</feature>
<feature type="binding site" evidence="1">
    <location>
        <position position="198"/>
    </location>
    <ligand>
        <name>Zn(2+)</name>
        <dbReference type="ChEBI" id="CHEBI:29105"/>
        <label>2</label>
    </ligand>
</feature>
<feature type="binding site" evidence="1">
    <location>
        <position position="198"/>
    </location>
    <ligand>
        <name>Zn(2+)</name>
        <dbReference type="ChEBI" id="CHEBI:29105"/>
        <label>3</label>
    </ligand>
</feature>
<feature type="binding site" evidence="1">
    <location>
        <position position="201"/>
    </location>
    <ligand>
        <name>Zn(2+)</name>
        <dbReference type="ChEBI" id="CHEBI:29105"/>
        <label>2</label>
    </ligand>
</feature>
<feature type="binding site" evidence="1">
    <location>
        <position position="203"/>
    </location>
    <ligand>
        <name>Zn(2+)</name>
        <dbReference type="ChEBI" id="CHEBI:29105"/>
        <label>3</label>
    </ligand>
</feature>
<feature type="binding site" evidence="1">
    <location>
        <position position="206"/>
    </location>
    <ligand>
        <name>Zn(2+)</name>
        <dbReference type="ChEBI" id="CHEBI:29105"/>
        <label>3</label>
    </ligand>
</feature>
<feature type="binding site" evidence="1">
    <location>
        <position position="253"/>
    </location>
    <ligand>
        <name>Zn(2+)</name>
        <dbReference type="ChEBI" id="CHEBI:29105"/>
        <label>4</label>
    </ligand>
</feature>
<feature type="binding site" evidence="1">
    <location>
        <position position="253"/>
    </location>
    <ligand>
        <name>Zn(2+)</name>
        <dbReference type="ChEBI" id="CHEBI:29105"/>
        <label>5</label>
    </ligand>
</feature>
<feature type="binding site" evidence="1">
    <location>
        <position position="255"/>
    </location>
    <ligand>
        <name>Zn(2+)</name>
        <dbReference type="ChEBI" id="CHEBI:29105"/>
        <label>4</label>
    </ligand>
</feature>
<feature type="binding site" evidence="1">
    <location>
        <position position="260"/>
    </location>
    <ligand>
        <name>Zn(2+)</name>
        <dbReference type="ChEBI" id="CHEBI:29105"/>
        <label>4</label>
    </ligand>
</feature>
<feature type="binding site" evidence="1">
    <location>
        <position position="260"/>
    </location>
    <ligand>
        <name>Zn(2+)</name>
        <dbReference type="ChEBI" id="CHEBI:29105"/>
        <label>6</label>
    </ligand>
</feature>
<feature type="binding site" evidence="1">
    <location>
        <position position="265"/>
    </location>
    <ligand>
        <name>Zn(2+)</name>
        <dbReference type="ChEBI" id="CHEBI:29105"/>
        <label>4</label>
    </ligand>
</feature>
<feature type="binding site" evidence="1">
    <location>
        <position position="267"/>
    </location>
    <ligand>
        <name>Zn(2+)</name>
        <dbReference type="ChEBI" id="CHEBI:29105"/>
        <label>5</label>
    </ligand>
</feature>
<feature type="binding site" evidence="1">
    <location>
        <position position="274"/>
    </location>
    <ligand>
        <name>Zn(2+)</name>
        <dbReference type="ChEBI" id="CHEBI:29105"/>
        <label>5</label>
    </ligand>
</feature>
<feature type="binding site" evidence="1">
    <location>
        <position position="274"/>
    </location>
    <ligand>
        <name>Zn(2+)</name>
        <dbReference type="ChEBI" id="CHEBI:29105"/>
        <label>6</label>
    </ligand>
</feature>
<feature type="binding site" evidence="1">
    <location>
        <position position="278"/>
    </location>
    <ligand>
        <name>Zn(2+)</name>
        <dbReference type="ChEBI" id="CHEBI:29105"/>
        <label>5</label>
    </ligand>
</feature>
<feature type="binding site" evidence="1">
    <location>
        <position position="280"/>
    </location>
    <ligand>
        <name>Zn(2+)</name>
        <dbReference type="ChEBI" id="CHEBI:29105"/>
        <label>6</label>
    </ligand>
</feature>
<feature type="binding site" evidence="1">
    <location>
        <position position="283"/>
    </location>
    <ligand>
        <name>Zn(2+)</name>
        <dbReference type="ChEBI" id="CHEBI:29105"/>
        <label>6</label>
    </ligand>
</feature>
<feature type="site" description="Critical for interaction with target DNA" evidence="1">
    <location>
        <position position="188"/>
    </location>
</feature>
<feature type="site" description="Interaction with DNA" evidence="1">
    <location>
        <position position="226"/>
    </location>
</feature>
<feature type="site" description="Critical for interaction with target DNA" evidence="1">
    <location>
        <position position="264"/>
    </location>
</feature>
<feature type="splice variant" id="VSP_034280" description="In isoform b." evidence="7">
    <location>
        <begin position="43"/>
        <end position="45"/>
    </location>
</feature>
<feature type="splice variant" id="VSP_034281" description="In isoform b." evidence="7">
    <location>
        <begin position="95"/>
        <end position="97"/>
    </location>
</feature>
<reference key="1">
    <citation type="journal article" date="1998" name="Science">
        <title>Genome sequence of the nematode C. elegans: a platform for investigating biology.</title>
        <authorList>
            <consortium name="The C. elegans sequencing consortium"/>
        </authorList>
    </citation>
    <scope>NUCLEOTIDE SEQUENCE [LARGE SCALE GENOMIC DNA]</scope>
    <source>
        <strain>Bristol N2</strain>
    </source>
</reference>
<reference key="2">
    <citation type="journal article" date="2006" name="Proc. Natl. Acad. Sci. U.S.A.">
        <title>Some C. elegans class B synthetic multivulva proteins encode a conserved LIN-35 Rb-containing complex distinct from a NuRD-like complex.</title>
        <authorList>
            <person name="Harrison M.M."/>
            <person name="Ceol C.J."/>
            <person name="Lu X."/>
            <person name="Horvitz H.R."/>
        </authorList>
    </citation>
    <scope>FUNCTION</scope>
    <scope>SUBCELLULAR LOCATION</scope>
    <scope>DEVELOPMENTAL STAGE</scope>
    <scope>IDENTIFICATION IN THE DRM COMPLEX</scope>
    <scope>DISRUPTION PHENOTYPE</scope>
</reference>
<reference key="3">
    <citation type="journal article" date="2007" name="Genetics">
        <title>DPL-1 DP, LIN-35 Rb and EFL-1 E2F act with the MCD-1 zinc-finger protein to promote programmed cell death in Caenorhabditis elegans.</title>
        <authorList>
            <person name="Reddien P.W."/>
            <person name="Andersen E.C."/>
            <person name="Huang M.C."/>
            <person name="Horvitz H.R."/>
        </authorList>
    </citation>
    <scope>DISRUPTION PHENOTYPE</scope>
</reference>
<reference key="4">
    <citation type="journal article" date="2016" name="Sci. Rep.">
        <title>Somatically expressed germ-granule components, PGL-1 and PGL-3, repress programmed cell death in C. elegans.</title>
        <authorList>
            <person name="Al-Amin M."/>
            <person name="Min H."/>
            <person name="Shim Y.H."/>
            <person name="Kawasaki I."/>
        </authorList>
    </citation>
    <scope>DISRUPTION PHENOTYPE</scope>
</reference>
<accession>Q95QD7</accession>
<accession>O62295</accession>
<organism>
    <name type="scientific">Caenorhabditis elegans</name>
    <dbReference type="NCBI Taxonomy" id="6239"/>
    <lineage>
        <taxon>Eukaryota</taxon>
        <taxon>Metazoa</taxon>
        <taxon>Ecdysozoa</taxon>
        <taxon>Nematoda</taxon>
        <taxon>Chromadorea</taxon>
        <taxon>Rhabditida</taxon>
        <taxon>Rhabditina</taxon>
        <taxon>Rhabditomorpha</taxon>
        <taxon>Rhabditoidea</taxon>
        <taxon>Rhabditidae</taxon>
        <taxon>Peloderinae</taxon>
        <taxon>Caenorhabditis</taxon>
    </lineage>
</organism>
<keyword id="KW-0025">Alternative splicing</keyword>
<keyword id="KW-0131">Cell cycle</keyword>
<keyword id="KW-0158">Chromosome</keyword>
<keyword id="KW-0238">DNA-binding</keyword>
<keyword id="KW-0479">Metal-binding</keyword>
<keyword id="KW-0539">Nucleus</keyword>
<keyword id="KW-1185">Reference proteome</keyword>
<keyword id="KW-0678">Repressor</keyword>
<keyword id="KW-0804">Transcription</keyword>
<keyword id="KW-0805">Transcription regulation</keyword>
<keyword id="KW-0862">Zinc</keyword>
<dbReference type="EMBL" id="Z82274">
    <property type="protein sequence ID" value="CAB05229.1"/>
    <property type="molecule type" value="Genomic_DNA"/>
</dbReference>
<dbReference type="EMBL" id="Z82274">
    <property type="protein sequence ID" value="CAB05228.1"/>
    <property type="molecule type" value="Genomic_DNA"/>
</dbReference>
<dbReference type="PIR" id="T23152">
    <property type="entry name" value="T23152"/>
</dbReference>
<dbReference type="RefSeq" id="NP_502544.1">
    <molecule id="Q95QD7-1"/>
    <property type="nucleotide sequence ID" value="NM_070143.4"/>
</dbReference>
<dbReference type="RefSeq" id="NP_502545.1">
    <molecule id="Q95QD7-2"/>
    <property type="nucleotide sequence ID" value="NM_070144.6"/>
</dbReference>
<dbReference type="SMR" id="Q95QD7"/>
<dbReference type="BioGRID" id="43369">
    <property type="interactions" value="4"/>
</dbReference>
<dbReference type="ComplexPortal" id="CPX-1100">
    <property type="entry name" value="DRM complex"/>
</dbReference>
<dbReference type="DIP" id="DIP-61306N"/>
<dbReference type="FunCoup" id="Q95QD7">
    <property type="interactions" value="185"/>
</dbReference>
<dbReference type="IntAct" id="Q95QD7">
    <property type="interactions" value="5"/>
</dbReference>
<dbReference type="STRING" id="6239.JC8.6a.1"/>
<dbReference type="PaxDb" id="6239-JC8.6a"/>
<dbReference type="EnsemblMetazoa" id="JC8.6a.1">
    <molecule id="Q95QD7-1"/>
    <property type="protein sequence ID" value="JC8.6a.1"/>
    <property type="gene ID" value="WBGene00003037"/>
</dbReference>
<dbReference type="EnsemblMetazoa" id="JC8.6b.1">
    <molecule id="Q95QD7-2"/>
    <property type="protein sequence ID" value="JC8.6b.1"/>
    <property type="gene ID" value="WBGene00003037"/>
</dbReference>
<dbReference type="GeneID" id="178280"/>
<dbReference type="KEGG" id="cel:CELE_JC8.6"/>
<dbReference type="UCSC" id="JC8.6a">
    <molecule id="Q95QD7-1"/>
    <property type="organism name" value="c. elegans"/>
</dbReference>
<dbReference type="AGR" id="WB:WBGene00003037"/>
<dbReference type="CTD" id="178280"/>
<dbReference type="WormBase" id="JC8.6a">
    <molecule id="Q95QD7-1"/>
    <property type="protein sequence ID" value="CE17989"/>
    <property type="gene ID" value="WBGene00003037"/>
    <property type="gene designation" value="lin-54"/>
</dbReference>
<dbReference type="WormBase" id="JC8.6b">
    <molecule id="Q95QD7-2"/>
    <property type="protein sequence ID" value="CE17990"/>
    <property type="gene ID" value="WBGene00003037"/>
    <property type="gene designation" value="lin-54"/>
</dbReference>
<dbReference type="eggNOG" id="KOG1171">
    <property type="taxonomic scope" value="Eukaryota"/>
</dbReference>
<dbReference type="GeneTree" id="ENSGT00940000168375"/>
<dbReference type="InParanoid" id="Q95QD7"/>
<dbReference type="OMA" id="KDCHNNI"/>
<dbReference type="OrthoDB" id="6283463at2759"/>
<dbReference type="PhylomeDB" id="Q95QD7"/>
<dbReference type="Reactome" id="R-CEL-1538133">
    <property type="pathway name" value="G0 and Early G1"/>
</dbReference>
<dbReference type="PRO" id="PR:Q95QD7"/>
<dbReference type="Proteomes" id="UP000001940">
    <property type="component" value="Chromosome IV"/>
</dbReference>
<dbReference type="Bgee" id="WBGene00003037">
    <property type="expression patterns" value="Expressed in germ line (C elegans) and 4 other cell types or tissues"/>
</dbReference>
<dbReference type="ExpressionAtlas" id="Q95QD7">
    <property type="expression patterns" value="baseline and differential"/>
</dbReference>
<dbReference type="GO" id="GO:0030849">
    <property type="term" value="C:autosome"/>
    <property type="evidence" value="ECO:0000314"/>
    <property type="project" value="WormBase"/>
</dbReference>
<dbReference type="GO" id="GO:0000794">
    <property type="term" value="C:condensed nuclear chromosome"/>
    <property type="evidence" value="ECO:0000314"/>
    <property type="project" value="WormBase"/>
</dbReference>
<dbReference type="GO" id="GO:0070176">
    <property type="term" value="C:DRM complex"/>
    <property type="evidence" value="ECO:0000314"/>
    <property type="project" value="UniProtKB"/>
</dbReference>
<dbReference type="GO" id="GO:0005634">
    <property type="term" value="C:nucleus"/>
    <property type="evidence" value="ECO:0000314"/>
    <property type="project" value="WormBase"/>
</dbReference>
<dbReference type="GO" id="GO:0046872">
    <property type="term" value="F:metal ion binding"/>
    <property type="evidence" value="ECO:0007669"/>
    <property type="project" value="UniProtKB-KW"/>
</dbReference>
<dbReference type="GO" id="GO:0000977">
    <property type="term" value="F:RNA polymerase II transcription regulatory region sequence-specific DNA binding"/>
    <property type="evidence" value="ECO:0000314"/>
    <property type="project" value="WormBase"/>
</dbReference>
<dbReference type="GO" id="GO:0040027">
    <property type="term" value="P:negative regulation of vulval development"/>
    <property type="evidence" value="ECO:0000314"/>
    <property type="project" value="ComplexPortal"/>
</dbReference>
<dbReference type="GO" id="GO:0006355">
    <property type="term" value="P:regulation of DNA-templated transcription"/>
    <property type="evidence" value="ECO:0000318"/>
    <property type="project" value="GO_Central"/>
</dbReference>
<dbReference type="GO" id="GO:0006357">
    <property type="term" value="P:regulation of transcription by RNA polymerase II"/>
    <property type="evidence" value="ECO:0000250"/>
    <property type="project" value="WormBase"/>
</dbReference>
<dbReference type="InterPro" id="IPR005172">
    <property type="entry name" value="CRC"/>
</dbReference>
<dbReference type="InterPro" id="IPR028307">
    <property type="entry name" value="Lin-54_fam"/>
</dbReference>
<dbReference type="InterPro" id="IPR033467">
    <property type="entry name" value="Tesmin/TSO1-like_CXC"/>
</dbReference>
<dbReference type="PANTHER" id="PTHR12446:SF34">
    <property type="entry name" value="PROTEIN LIN-54 HOMOLOG"/>
    <property type="match status" value="1"/>
</dbReference>
<dbReference type="PANTHER" id="PTHR12446">
    <property type="entry name" value="TESMIN/TSO1-RELATED"/>
    <property type="match status" value="1"/>
</dbReference>
<dbReference type="Pfam" id="PF03638">
    <property type="entry name" value="TCR"/>
    <property type="match status" value="2"/>
</dbReference>
<dbReference type="SMART" id="SM01114">
    <property type="entry name" value="CXC"/>
    <property type="match status" value="2"/>
</dbReference>
<dbReference type="PROSITE" id="PS51634">
    <property type="entry name" value="CRC"/>
    <property type="match status" value="1"/>
</dbReference>
<proteinExistence type="evidence at protein level"/>
<comment type="function">
    <text evidence="4">Synthetic multivulva class B (synMuvB) protein. SynMuvB proteins are required to repress the induction of vulval development by Ras signaling and probably act by forming the multiprotein DRM complex that repress transcription.</text>
</comment>
<comment type="subunit">
    <text evidence="4">Component of the DRM complex, at least composed of lin-9, lin-35, lin-37, lin-52, lin-53, lin-54- dpl-1 and efl-1.</text>
</comment>
<comment type="interaction">
    <interactant intactId="EBI-6762766">
        <id>Q95QD7</id>
    </interactant>
    <interactant intactId="EBI-324325">
        <id>Q23482</id>
        <label>lin-37</label>
    </interactant>
    <organismsDiffer>false</organismsDiffer>
    <experiments>6</experiments>
</comment>
<comment type="subcellular location">
    <subcellularLocation>
        <location evidence="4">Nucleus</location>
    </subcellularLocation>
    <subcellularLocation>
        <location evidence="4">Chromosome</location>
    </subcellularLocation>
    <text evidence="4">Localizes to condensed chromosomes during the diakinesis phase of meiosis.</text>
</comment>
<comment type="alternative products">
    <event type="alternative splicing"/>
    <isoform>
        <id>Q95QD7-1</id>
        <name evidence="8">a</name>
        <sequence type="displayed"/>
    </isoform>
    <isoform>
        <id>Q95QD7-2</id>
        <name evidence="9">b</name>
        <sequence type="described" ref="VSP_034280 VSP_034281"/>
    </isoform>
</comment>
<comment type="developmental stage">
    <text evidence="4">Widely expressed. Present in most cells from the embryo through the adulthood.</text>
</comment>
<comment type="domain">
    <text evidence="1">The CRC domain mediates DNA-binding. It contains two CXC subdomains (joined by a flexible linker) which are both required for efficient association with target DNA. Each CXC subdomain coordinates three Zn(2+) ions.</text>
</comment>
<comment type="disruption phenotype">
    <text evidence="4 5 6">Decreased protein levels of DRM complex components including lin-9 and lin-52 (PubMed:17075059). Double knockout with the programmed cell death regulator mcd-1 results in 100% lethality during the L1 stage of larval development (PubMed:17237514). RNAi-mediated knockdown in a ced-1 mutant background results in reduced somatic cell apoptosis (PubMed:27650246).</text>
</comment>
<comment type="similarity">
    <text evidence="7">Belongs to the lin-54 family.</text>
</comment>
<sequence>MNQGEIVYQDDDDYYDESEIYDNYEEGAEFIEVNGQLVPHNPNLQAQQNRPGTSSMIQQHNRSMEVNQGLVKDEPIDTSSHRVYVPPPRPVQRKLFQPGPSTPGSSQYTVRNLSNLSGSPSMYDRQPASLPRTVQPMGLEMGNSEQRKVYIDMKDHVSHIRLKTKKKVFAPGQRKPCNCTKSQCLKLYCDCFANGEFCRDCNCKDCHNNIEYDSQRSKAIRQSLERNPNAFKPKIGIARGGITDIERLHQKGCHCKKSGCLKNYCECYEAKVPCTDRCKCKGCQNTETYRMTRYKNSGGAVSNTNALMSLTNASSTATPDSGPGSVVTDEHGDDYEDMLLSHKPKVEMDPRRFPWYYMTDEVVEAATMCMVAQAEEALNYEKVQTEDEKLINMEKLVLREFGRCLEQMITNTTELTQDLDAAPTDDIPGPSTSTS</sequence>
<name>LIN54_CAEEL</name>
<evidence type="ECO:0000250" key="1">
    <source>
        <dbReference type="UniProtKB" id="Q6MZP7"/>
    </source>
</evidence>
<evidence type="ECO:0000255" key="2">
    <source>
        <dbReference type="PROSITE-ProRule" id="PRU00971"/>
    </source>
</evidence>
<evidence type="ECO:0000256" key="3">
    <source>
        <dbReference type="SAM" id="MobiDB-lite"/>
    </source>
</evidence>
<evidence type="ECO:0000269" key="4">
    <source>
    </source>
</evidence>
<evidence type="ECO:0000269" key="5">
    <source>
    </source>
</evidence>
<evidence type="ECO:0000269" key="6">
    <source>
    </source>
</evidence>
<evidence type="ECO:0000305" key="7"/>
<evidence type="ECO:0000312" key="8">
    <source>
        <dbReference type="WormBase" id="JC8.6a"/>
    </source>
</evidence>
<evidence type="ECO:0000312" key="9">
    <source>
        <dbReference type="WormBase" id="JC8.6b"/>
    </source>
</evidence>
<gene>
    <name evidence="8" type="primary">lin-54</name>
    <name evidence="8" type="ORF">JC8.6</name>
</gene>